<comment type="subunit">
    <text evidence="1">Forms oligomers.</text>
</comment>
<comment type="subcellular location">
    <subcellularLocation>
        <location evidence="1">Cytoplasm</location>
        <location evidence="1">Nucleoid</location>
    </subcellularLocation>
</comment>
<comment type="similarity">
    <text evidence="1">Belongs to the MraZ family.</text>
</comment>
<sequence>MFRGANAVSLDAKGRISMPARYREELMARSAGQLIVTIDAMDPCLCIYPLPEWELIETKLRELPSLREETRRLQRLLIGNAVDLELDGSGRFLIPPRLREHASLDKHAMLVGQLNKFQLWNEDAWIAIANADLAAIKQQPGDLPGELRDLIL</sequence>
<reference key="1">
    <citation type="journal article" date="2009" name="J. Bacteriol.">
        <title>Genome sequence of Azotobacter vinelandii, an obligate aerobe specialized to support diverse anaerobic metabolic processes.</title>
        <authorList>
            <person name="Setubal J.C."/>
            <person name="Dos Santos P."/>
            <person name="Goldman B.S."/>
            <person name="Ertesvaag H."/>
            <person name="Espin G."/>
            <person name="Rubio L.M."/>
            <person name="Valla S."/>
            <person name="Almeida N.F."/>
            <person name="Balasubramanian D."/>
            <person name="Cromes L."/>
            <person name="Curatti L."/>
            <person name="Du Z."/>
            <person name="Godsy E."/>
            <person name="Goodner B."/>
            <person name="Hellner-Burris K."/>
            <person name="Hernandez J.A."/>
            <person name="Houmiel K."/>
            <person name="Imperial J."/>
            <person name="Kennedy C."/>
            <person name="Larson T.J."/>
            <person name="Latreille P."/>
            <person name="Ligon L.S."/>
            <person name="Lu J."/>
            <person name="Maerk M."/>
            <person name="Miller N.M."/>
            <person name="Norton S."/>
            <person name="O'Carroll I.P."/>
            <person name="Paulsen I."/>
            <person name="Raulfs E.C."/>
            <person name="Roemer R."/>
            <person name="Rosser J."/>
            <person name="Segura D."/>
            <person name="Slater S."/>
            <person name="Stricklin S.L."/>
            <person name="Studholme D.J."/>
            <person name="Sun J."/>
            <person name="Viana C.J."/>
            <person name="Wallin E."/>
            <person name="Wang B."/>
            <person name="Wheeler C."/>
            <person name="Zhu H."/>
            <person name="Dean D.R."/>
            <person name="Dixon R."/>
            <person name="Wood D."/>
        </authorList>
    </citation>
    <scope>NUCLEOTIDE SEQUENCE [LARGE SCALE GENOMIC DNA]</scope>
    <source>
        <strain>DJ / ATCC BAA-1303</strain>
    </source>
</reference>
<keyword id="KW-0963">Cytoplasm</keyword>
<keyword id="KW-0238">DNA-binding</keyword>
<keyword id="KW-0677">Repeat</keyword>
<keyword id="KW-0804">Transcription</keyword>
<keyword id="KW-0805">Transcription regulation</keyword>
<gene>
    <name evidence="1" type="primary">mraZ</name>
    <name type="ordered locus">Avin_13160</name>
</gene>
<proteinExistence type="inferred from homology"/>
<feature type="chain" id="PRO_1000213167" description="Transcriptional regulator MraZ">
    <location>
        <begin position="1"/>
        <end position="152"/>
    </location>
</feature>
<feature type="domain" description="SpoVT-AbrB 1" evidence="2">
    <location>
        <begin position="5"/>
        <end position="52"/>
    </location>
</feature>
<feature type="domain" description="SpoVT-AbrB 2" evidence="2">
    <location>
        <begin position="81"/>
        <end position="124"/>
    </location>
</feature>
<protein>
    <recommendedName>
        <fullName>Transcriptional regulator MraZ</fullName>
    </recommendedName>
</protein>
<accession>C1DQ90</accession>
<dbReference type="EMBL" id="CP001157">
    <property type="protein sequence ID" value="ACO77542.1"/>
    <property type="molecule type" value="Genomic_DNA"/>
</dbReference>
<dbReference type="RefSeq" id="WP_012699962.1">
    <property type="nucleotide sequence ID" value="NC_012560.1"/>
</dbReference>
<dbReference type="SMR" id="C1DQ90"/>
<dbReference type="STRING" id="322710.Avin_13160"/>
<dbReference type="EnsemblBacteria" id="ACO77542">
    <property type="protein sequence ID" value="ACO77542"/>
    <property type="gene ID" value="Avin_13160"/>
</dbReference>
<dbReference type="GeneID" id="88184632"/>
<dbReference type="KEGG" id="avn:Avin_13160"/>
<dbReference type="eggNOG" id="COG2001">
    <property type="taxonomic scope" value="Bacteria"/>
</dbReference>
<dbReference type="HOGENOM" id="CLU_107907_2_0_6"/>
<dbReference type="OrthoDB" id="9807753at2"/>
<dbReference type="Proteomes" id="UP000002424">
    <property type="component" value="Chromosome"/>
</dbReference>
<dbReference type="GO" id="GO:0005737">
    <property type="term" value="C:cytoplasm"/>
    <property type="evidence" value="ECO:0007669"/>
    <property type="project" value="UniProtKB-UniRule"/>
</dbReference>
<dbReference type="GO" id="GO:0009295">
    <property type="term" value="C:nucleoid"/>
    <property type="evidence" value="ECO:0007669"/>
    <property type="project" value="UniProtKB-SubCell"/>
</dbReference>
<dbReference type="GO" id="GO:0003700">
    <property type="term" value="F:DNA-binding transcription factor activity"/>
    <property type="evidence" value="ECO:0007669"/>
    <property type="project" value="UniProtKB-UniRule"/>
</dbReference>
<dbReference type="GO" id="GO:0000976">
    <property type="term" value="F:transcription cis-regulatory region binding"/>
    <property type="evidence" value="ECO:0007669"/>
    <property type="project" value="TreeGrafter"/>
</dbReference>
<dbReference type="GO" id="GO:2000143">
    <property type="term" value="P:negative regulation of DNA-templated transcription initiation"/>
    <property type="evidence" value="ECO:0007669"/>
    <property type="project" value="TreeGrafter"/>
</dbReference>
<dbReference type="CDD" id="cd16321">
    <property type="entry name" value="MraZ_C"/>
    <property type="match status" value="1"/>
</dbReference>
<dbReference type="CDD" id="cd16320">
    <property type="entry name" value="MraZ_N"/>
    <property type="match status" value="1"/>
</dbReference>
<dbReference type="Gene3D" id="3.40.1550.20">
    <property type="entry name" value="Transcriptional regulator MraZ domain"/>
    <property type="match status" value="1"/>
</dbReference>
<dbReference type="HAMAP" id="MF_01008">
    <property type="entry name" value="MraZ"/>
    <property type="match status" value="1"/>
</dbReference>
<dbReference type="InterPro" id="IPR003444">
    <property type="entry name" value="MraZ"/>
</dbReference>
<dbReference type="InterPro" id="IPR035644">
    <property type="entry name" value="MraZ_C"/>
</dbReference>
<dbReference type="InterPro" id="IPR020603">
    <property type="entry name" value="MraZ_dom"/>
</dbReference>
<dbReference type="InterPro" id="IPR035642">
    <property type="entry name" value="MraZ_N"/>
</dbReference>
<dbReference type="InterPro" id="IPR038619">
    <property type="entry name" value="MraZ_sf"/>
</dbReference>
<dbReference type="InterPro" id="IPR007159">
    <property type="entry name" value="SpoVT-AbrB_dom"/>
</dbReference>
<dbReference type="InterPro" id="IPR037914">
    <property type="entry name" value="SpoVT-AbrB_sf"/>
</dbReference>
<dbReference type="NCBIfam" id="TIGR00242">
    <property type="entry name" value="division/cell wall cluster transcriptional repressor MraZ"/>
    <property type="match status" value="1"/>
</dbReference>
<dbReference type="PANTHER" id="PTHR34701">
    <property type="entry name" value="TRANSCRIPTIONAL REGULATOR MRAZ"/>
    <property type="match status" value="1"/>
</dbReference>
<dbReference type="PANTHER" id="PTHR34701:SF1">
    <property type="entry name" value="TRANSCRIPTIONAL REGULATOR MRAZ"/>
    <property type="match status" value="1"/>
</dbReference>
<dbReference type="Pfam" id="PF02381">
    <property type="entry name" value="MraZ"/>
    <property type="match status" value="2"/>
</dbReference>
<dbReference type="SUPFAM" id="SSF89447">
    <property type="entry name" value="AbrB/MazE/MraZ-like"/>
    <property type="match status" value="1"/>
</dbReference>
<dbReference type="PROSITE" id="PS51740">
    <property type="entry name" value="SPOVT_ABRB"/>
    <property type="match status" value="2"/>
</dbReference>
<name>MRAZ_AZOVD</name>
<evidence type="ECO:0000255" key="1">
    <source>
        <dbReference type="HAMAP-Rule" id="MF_01008"/>
    </source>
</evidence>
<evidence type="ECO:0000255" key="2">
    <source>
        <dbReference type="PROSITE-ProRule" id="PRU01076"/>
    </source>
</evidence>
<organism>
    <name type="scientific">Azotobacter vinelandii (strain DJ / ATCC BAA-1303)</name>
    <dbReference type="NCBI Taxonomy" id="322710"/>
    <lineage>
        <taxon>Bacteria</taxon>
        <taxon>Pseudomonadati</taxon>
        <taxon>Pseudomonadota</taxon>
        <taxon>Gammaproteobacteria</taxon>
        <taxon>Pseudomonadales</taxon>
        <taxon>Pseudomonadaceae</taxon>
        <taxon>Azotobacter</taxon>
    </lineage>
</organism>